<dbReference type="EC" id="2.7.1.23" evidence="1"/>
<dbReference type="EMBL" id="AP009049">
    <property type="protein sequence ID" value="BAH06181.1"/>
    <property type="molecule type" value="Genomic_DNA"/>
</dbReference>
<dbReference type="RefSeq" id="WP_012101619.1">
    <property type="nucleotide sequence ID" value="NC_011837.1"/>
</dbReference>
<dbReference type="SMR" id="B9E106"/>
<dbReference type="KEGG" id="ckr:CKR_1130"/>
<dbReference type="HOGENOM" id="CLU_008831_0_1_9"/>
<dbReference type="Proteomes" id="UP000007969">
    <property type="component" value="Chromosome"/>
</dbReference>
<dbReference type="GO" id="GO:0005737">
    <property type="term" value="C:cytoplasm"/>
    <property type="evidence" value="ECO:0007669"/>
    <property type="project" value="UniProtKB-SubCell"/>
</dbReference>
<dbReference type="GO" id="GO:0005524">
    <property type="term" value="F:ATP binding"/>
    <property type="evidence" value="ECO:0007669"/>
    <property type="project" value="UniProtKB-KW"/>
</dbReference>
<dbReference type="GO" id="GO:0046872">
    <property type="term" value="F:metal ion binding"/>
    <property type="evidence" value="ECO:0007669"/>
    <property type="project" value="UniProtKB-UniRule"/>
</dbReference>
<dbReference type="GO" id="GO:0051287">
    <property type="term" value="F:NAD binding"/>
    <property type="evidence" value="ECO:0007669"/>
    <property type="project" value="UniProtKB-ARBA"/>
</dbReference>
<dbReference type="GO" id="GO:0003951">
    <property type="term" value="F:NAD+ kinase activity"/>
    <property type="evidence" value="ECO:0007669"/>
    <property type="project" value="UniProtKB-UniRule"/>
</dbReference>
<dbReference type="GO" id="GO:0019674">
    <property type="term" value="P:NAD metabolic process"/>
    <property type="evidence" value="ECO:0007669"/>
    <property type="project" value="InterPro"/>
</dbReference>
<dbReference type="GO" id="GO:0006741">
    <property type="term" value="P:NADP biosynthetic process"/>
    <property type="evidence" value="ECO:0007669"/>
    <property type="project" value="UniProtKB-UniRule"/>
</dbReference>
<dbReference type="Gene3D" id="3.40.50.10330">
    <property type="entry name" value="Probable inorganic polyphosphate/atp-NAD kinase, domain 1"/>
    <property type="match status" value="1"/>
</dbReference>
<dbReference type="Gene3D" id="2.60.200.30">
    <property type="entry name" value="Probable inorganic polyphosphate/atp-NAD kinase, domain 2"/>
    <property type="match status" value="1"/>
</dbReference>
<dbReference type="HAMAP" id="MF_00361">
    <property type="entry name" value="NAD_kinase"/>
    <property type="match status" value="1"/>
</dbReference>
<dbReference type="InterPro" id="IPR017438">
    <property type="entry name" value="ATP-NAD_kinase_N"/>
</dbReference>
<dbReference type="InterPro" id="IPR017437">
    <property type="entry name" value="ATP-NAD_kinase_PpnK-typ_C"/>
</dbReference>
<dbReference type="InterPro" id="IPR016064">
    <property type="entry name" value="NAD/diacylglycerol_kinase_sf"/>
</dbReference>
<dbReference type="InterPro" id="IPR002504">
    <property type="entry name" value="NADK"/>
</dbReference>
<dbReference type="PANTHER" id="PTHR20275">
    <property type="entry name" value="NAD KINASE"/>
    <property type="match status" value="1"/>
</dbReference>
<dbReference type="PANTHER" id="PTHR20275:SF0">
    <property type="entry name" value="NAD KINASE"/>
    <property type="match status" value="1"/>
</dbReference>
<dbReference type="Pfam" id="PF01513">
    <property type="entry name" value="NAD_kinase"/>
    <property type="match status" value="1"/>
</dbReference>
<dbReference type="Pfam" id="PF20143">
    <property type="entry name" value="NAD_kinase_C"/>
    <property type="match status" value="1"/>
</dbReference>
<dbReference type="SUPFAM" id="SSF111331">
    <property type="entry name" value="NAD kinase/diacylglycerol kinase-like"/>
    <property type="match status" value="1"/>
</dbReference>
<reference key="1">
    <citation type="submission" date="2005-09" db="EMBL/GenBank/DDBJ databases">
        <title>Complete genome sequence of Clostridium kluyveri and comparative genomics of Clostridia species.</title>
        <authorList>
            <person name="Inui M."/>
            <person name="Nonaka H."/>
            <person name="Shinoda Y."/>
            <person name="Ikenaga Y."/>
            <person name="Abe M."/>
            <person name="Naito K."/>
            <person name="Vertes A.A."/>
            <person name="Yukawa H."/>
        </authorList>
    </citation>
    <scope>NUCLEOTIDE SEQUENCE [LARGE SCALE GENOMIC DNA]</scope>
    <source>
        <strain>NBRC 12016</strain>
    </source>
</reference>
<name>NADK_CLOK1</name>
<gene>
    <name evidence="1" type="primary">nadK</name>
    <name type="ordered locus">CKR_1130</name>
</gene>
<proteinExistence type="inferred from homology"/>
<comment type="function">
    <text evidence="1">Involved in the regulation of the intracellular balance of NAD and NADP, and is a key enzyme in the biosynthesis of NADP. Catalyzes specifically the phosphorylation on 2'-hydroxyl of the adenosine moiety of NAD to yield NADP.</text>
</comment>
<comment type="catalytic activity">
    <reaction evidence="1">
        <text>NAD(+) + ATP = ADP + NADP(+) + H(+)</text>
        <dbReference type="Rhea" id="RHEA:18629"/>
        <dbReference type="ChEBI" id="CHEBI:15378"/>
        <dbReference type="ChEBI" id="CHEBI:30616"/>
        <dbReference type="ChEBI" id="CHEBI:57540"/>
        <dbReference type="ChEBI" id="CHEBI:58349"/>
        <dbReference type="ChEBI" id="CHEBI:456216"/>
        <dbReference type="EC" id="2.7.1.23"/>
    </reaction>
</comment>
<comment type="cofactor">
    <cofactor evidence="1">
        <name>a divalent metal cation</name>
        <dbReference type="ChEBI" id="CHEBI:60240"/>
    </cofactor>
</comment>
<comment type="subcellular location">
    <subcellularLocation>
        <location evidence="1">Cytoplasm</location>
    </subcellularLocation>
</comment>
<comment type="similarity">
    <text evidence="1">Belongs to the NAD kinase family.</text>
</comment>
<protein>
    <recommendedName>
        <fullName evidence="1">NAD kinase</fullName>
        <ecNumber evidence="1">2.7.1.23</ecNumber>
    </recommendedName>
    <alternativeName>
        <fullName evidence="1">ATP-dependent NAD kinase</fullName>
    </alternativeName>
</protein>
<keyword id="KW-0067">ATP-binding</keyword>
<keyword id="KW-0963">Cytoplasm</keyword>
<keyword id="KW-0418">Kinase</keyword>
<keyword id="KW-0520">NAD</keyword>
<keyword id="KW-0521">NADP</keyword>
<keyword id="KW-0547">Nucleotide-binding</keyword>
<keyword id="KW-0808">Transferase</keyword>
<accession>B9E106</accession>
<organism>
    <name type="scientific">Clostridium kluyveri (strain NBRC 12016)</name>
    <dbReference type="NCBI Taxonomy" id="583346"/>
    <lineage>
        <taxon>Bacteria</taxon>
        <taxon>Bacillati</taxon>
        <taxon>Bacillota</taxon>
        <taxon>Clostridia</taxon>
        <taxon>Eubacteriales</taxon>
        <taxon>Clostridiaceae</taxon>
        <taxon>Clostridium</taxon>
    </lineage>
</organism>
<sequence>MKNIGINVNTTKDPNKEMLNFIIESIKNIDKSVNIKTYENCMGLDENESSSLDVIIVLGGDGTILNTSRNVLRSKTPILGINIGHLGFLAQVEINSVEAALEKLFRGEYTIEKRDMIQCTYNEGNKIKRYDGLNDVVLYRGIKSRIQRYDVYINDAFYNSFSGDGIIICTSTGSTAYNLSAGGPIIHPLLDVLCLTPMYSQFFASRSIVLDSRSLISISIEKNYEDSFLSIDGQKWVAVNGSQTIKINKSKNKRRLIKFDDAYFNTLREKIIFNAKGCEGGIL</sequence>
<feature type="chain" id="PRO_1000133566" description="NAD kinase">
    <location>
        <begin position="1"/>
        <end position="283"/>
    </location>
</feature>
<feature type="active site" description="Proton acceptor" evidence="1">
    <location>
        <position position="61"/>
    </location>
</feature>
<feature type="binding site" evidence="1">
    <location>
        <begin position="61"/>
        <end position="62"/>
    </location>
    <ligand>
        <name>NAD(+)</name>
        <dbReference type="ChEBI" id="CHEBI:57540"/>
    </ligand>
</feature>
<feature type="binding site" evidence="1">
    <location>
        <begin position="134"/>
        <end position="135"/>
    </location>
    <ligand>
        <name>NAD(+)</name>
        <dbReference type="ChEBI" id="CHEBI:57540"/>
    </ligand>
</feature>
<feature type="binding site" evidence="1">
    <location>
        <position position="145"/>
    </location>
    <ligand>
        <name>NAD(+)</name>
        <dbReference type="ChEBI" id="CHEBI:57540"/>
    </ligand>
</feature>
<feature type="binding site" evidence="1">
    <location>
        <position position="164"/>
    </location>
    <ligand>
        <name>NAD(+)</name>
        <dbReference type="ChEBI" id="CHEBI:57540"/>
    </ligand>
</feature>
<feature type="binding site" evidence="1">
    <location>
        <begin position="175"/>
        <end position="180"/>
    </location>
    <ligand>
        <name>NAD(+)</name>
        <dbReference type="ChEBI" id="CHEBI:57540"/>
    </ligand>
</feature>
<feature type="binding site" evidence="1">
    <location>
        <position position="234"/>
    </location>
    <ligand>
        <name>NAD(+)</name>
        <dbReference type="ChEBI" id="CHEBI:57540"/>
    </ligand>
</feature>
<evidence type="ECO:0000255" key="1">
    <source>
        <dbReference type="HAMAP-Rule" id="MF_00361"/>
    </source>
</evidence>